<protein>
    <recommendedName>
        <fullName evidence="9">Venom peptide 2-long</fullName>
        <shortName evidence="6">OdVP2L</shortName>
    </recommendedName>
    <component>
        <recommendedName>
            <fullName evidence="5">Orancis-protonectin</fullName>
        </recommendedName>
        <alternativeName>
            <fullName evidence="9 11">Venom peptide 2</fullName>
            <shortName evidence="6">OdVP2</shortName>
            <shortName evidence="6">VP2</shortName>
        </alternativeName>
    </component>
</protein>
<reference key="1">
    <citation type="journal article" date="2010" name="Toxicon">
        <title>Isolation and molecular cloning of venom peptides from Orancistrocerus drewseni (Hymenoptera: Eumenidae).</title>
        <authorList>
            <person name="Baek J.H."/>
            <person name="Lee S.H."/>
        </authorList>
    </citation>
    <scope>NUCLEOTIDE SEQUENCE [MRNA]</scope>
    <scope>PROTEIN SEQUENCE OF 55-68</scope>
    <scope>FUNCTION</scope>
    <scope>SUBCELLULAR LOCATION</scope>
    <scope>MASS SPECTROMETRY</scope>
    <scope>AMIDATION AT LEU-68</scope>
    <source>
        <tissue>Venom</tissue>
        <tissue>Venom gland</tissue>
    </source>
</reference>
<reference key="2">
    <citation type="journal article" date="2009" name="Amino Acids">
        <title>Novel mastoparan and protonectin analogs isolated from a solitary wasp, Orancistrocerus drewseni drewseni.</title>
        <authorList>
            <person name="Murata K."/>
            <person name="Shinada T."/>
            <person name="Ohfune Y."/>
            <person name="Hisada M."/>
            <person name="Yasuda A."/>
            <person name="Naoki H."/>
            <person name="Nakajima T."/>
        </authorList>
    </citation>
    <scope>PROTEIN SEQUENCE OF 57-68</scope>
    <scope>FUNCTION</scope>
    <scope>SUBCELLULAR LOCATION</scope>
    <scope>MASS SPECTROMETRY</scope>
    <scope>AMIDATION AT LEU-68</scope>
    <source>
        <tissue>Venom</tissue>
    </source>
</reference>
<reference key="3">
    <citation type="journal article" date="2011" name="Peptides">
        <title>Venom peptides from solitary hunting wasps induce feeding disorder in lepidopteran larvae.</title>
        <authorList>
            <person name="Baek J.H."/>
            <person name="Ji Y."/>
            <person name="Shin J.S."/>
            <person name="Lee S."/>
            <person name="Lee S.H."/>
        </authorList>
    </citation>
    <scope>FUNCTION</scope>
    <scope>BIOASSAY</scope>
    <scope>SYNTHESIS OF 57-68</scope>
</reference>
<reference key="4">
    <citation type="journal article" date="2016" name="Toxins">
        <title>Peptide toxins in solitary wasp venoms.</title>
        <authorList>
            <person name="Konno K."/>
            <person name="Kazuma K."/>
            <person name="Nihei K."/>
        </authorList>
    </citation>
    <scope>REVIEW</scope>
</reference>
<dbReference type="EMBL" id="GQ205581">
    <property type="protein sequence ID" value="ACU30739.1"/>
    <property type="molecule type" value="mRNA"/>
</dbReference>
<dbReference type="GO" id="GO:0005576">
    <property type="term" value="C:extracellular region"/>
    <property type="evidence" value="ECO:0000314"/>
    <property type="project" value="UniProtKB"/>
</dbReference>
<dbReference type="GO" id="GO:0016020">
    <property type="term" value="C:membrane"/>
    <property type="evidence" value="ECO:0007669"/>
    <property type="project" value="UniProtKB-KW"/>
</dbReference>
<dbReference type="GO" id="GO:0044218">
    <property type="term" value="C:other organism cell membrane"/>
    <property type="evidence" value="ECO:0007669"/>
    <property type="project" value="UniProtKB-KW"/>
</dbReference>
<dbReference type="GO" id="GO:0090729">
    <property type="term" value="F:toxin activity"/>
    <property type="evidence" value="ECO:0000314"/>
    <property type="project" value="UniProtKB"/>
</dbReference>
<dbReference type="GO" id="GO:0042742">
    <property type="term" value="P:defense response to bacterium"/>
    <property type="evidence" value="ECO:0007669"/>
    <property type="project" value="UniProtKB-KW"/>
</dbReference>
<dbReference type="GO" id="GO:0050832">
    <property type="term" value="P:defense response to fungus"/>
    <property type="evidence" value="ECO:0007669"/>
    <property type="project" value="UniProtKB-KW"/>
</dbReference>
<dbReference type="GO" id="GO:0044179">
    <property type="term" value="P:hemolysis in another organism"/>
    <property type="evidence" value="ECO:0000314"/>
    <property type="project" value="UniProtKB"/>
</dbReference>
<dbReference type="GO" id="GO:0045087">
    <property type="term" value="P:innate immune response"/>
    <property type="evidence" value="ECO:0007669"/>
    <property type="project" value="UniProtKB-KW"/>
</dbReference>
<name>PROTO_ORADR</name>
<accession>P86147</accession>
<accession>C7DT08</accession>
<organism>
    <name type="scientific">Orancistrocerus drewseni</name>
    <name type="common">Solitary wasp</name>
    <dbReference type="NCBI Taxonomy" id="529024"/>
    <lineage>
        <taxon>Eukaryota</taxon>
        <taxon>Metazoa</taxon>
        <taxon>Ecdysozoa</taxon>
        <taxon>Arthropoda</taxon>
        <taxon>Hexapoda</taxon>
        <taxon>Insecta</taxon>
        <taxon>Pterygota</taxon>
        <taxon>Neoptera</taxon>
        <taxon>Endopterygota</taxon>
        <taxon>Hymenoptera</taxon>
        <taxon>Apocrita</taxon>
        <taxon>Aculeata</taxon>
        <taxon>Vespoidea</taxon>
        <taxon>Vespidae</taxon>
        <taxon>Eumeninae</taxon>
        <taxon>Orancistrocerus</taxon>
    </lineage>
</organism>
<proteinExistence type="evidence at protein level"/>
<feature type="signal peptide" evidence="1">
    <location>
        <begin position="1"/>
        <end position="24"/>
    </location>
</feature>
<feature type="propeptide" id="PRO_0000390691" evidence="3">
    <location>
        <begin position="25"/>
        <end position="54"/>
    </location>
</feature>
<feature type="peptide" id="PRO_0000390692" description="Venom peptide 2-long" evidence="3">
    <location>
        <begin position="55"/>
        <end position="68"/>
    </location>
</feature>
<feature type="peptide" id="PRO_0000372684" description="Orancis-protonectin" evidence="2">
    <location>
        <begin position="57"/>
        <end position="68"/>
    </location>
</feature>
<feature type="repeat" description="AXPX 1" evidence="7">
    <location>
        <begin position="24"/>
        <end position="27"/>
    </location>
</feature>
<feature type="repeat" description="AXPX 2" evidence="7">
    <location>
        <begin position="32"/>
        <end position="35"/>
    </location>
</feature>
<feature type="repeat" description="AXPX 3" evidence="7">
    <location>
        <begin position="44"/>
        <end position="47"/>
    </location>
</feature>
<feature type="repeat" description="AXPX 4" evidence="7">
    <location>
        <begin position="50"/>
        <end position="53"/>
    </location>
</feature>
<feature type="repeat" description="AXPX 5" evidence="7">
    <location>
        <begin position="54"/>
        <end position="57"/>
    </location>
</feature>
<feature type="modified residue" description="Leucine amide" evidence="2 3">
    <location>
        <position position="68"/>
    </location>
</feature>
<comment type="function">
    <molecule>Venom peptide 2-long</molecule>
    <text evidence="3">Antimicrobial peptide with strong activity against the fungus B.cinerea (MIC=0.5 ug/ml), and poor activities against the fungus C.albicans (MIC=100 ug/ml), the Gram-positive bacterium S.aureus (MIC=125 ug/ml) and the Gram-negative bacterium E.coli (MIC=125 ug/ml) (PubMed:19857508).</text>
</comment>
<comment type="function">
    <molecule>Orancis-protonectin</molecule>
    <text evidence="2 3 4">Antimicrobial peptide with strong activity against the fungus B.cinerea (MIC=0.4 uM), and poor activities against the fungus C.albicans (MIC=16 uM), the Gram-positive bacterium S.aureus (MIC=20 uM) and the Gram-negative bacterium E.coli (MIC=79 uM) (PubMed:19857508). Shows cytolytic activity against insect cell lines (PubMed:21184791). Has potent hemolytic activity against ovine erythrocytes (PubMed:18695936). Has potent hemolytic activity against human erythrocytes (EC(50)=31 uM) (PubMed:21184791). In vivo, peptide injection in the vicinity of the head and thorax of lepidopteran larvae induces feeding disorder followed by death due to starvation (PubMed:21184791).</text>
</comment>
<comment type="subcellular location">
    <subcellularLocation>
        <location evidence="2 3">Secreted</location>
    </subcellularLocation>
    <subcellularLocation>
        <location evidence="7">Target cell membrane</location>
    </subcellularLocation>
    <text evidence="10">Has an amphipathic alpha-helical conformation.</text>
</comment>
<comment type="tissue specificity">
    <text evidence="8 9">Expressed by the venom gland.</text>
</comment>
<comment type="mass spectrometry">
    <molecule>Orancis-protonectin</molecule>
</comment>
<comment type="mass spectrometry">
    <molecule>Orancis-protonectin</molecule>
</comment>
<comment type="mass spectrometry">
    <molecule>Venom peptide 2-long</molecule>
</comment>
<comment type="mass spectrometry">
    <molecule>Orancis-protonectin</molecule>
</comment>
<comment type="similarity">
    <text evidence="1">Belongs to the MCD family. Protonectin subfamily.</text>
</comment>
<keyword id="KW-0027">Amidation</keyword>
<keyword id="KW-0044">Antibiotic</keyword>
<keyword id="KW-0929">Antimicrobial</keyword>
<keyword id="KW-0204">Cytolysis</keyword>
<keyword id="KW-0903">Direct protein sequencing</keyword>
<keyword id="KW-0295">Fungicide</keyword>
<keyword id="KW-0391">Immunity</keyword>
<keyword id="KW-0399">Innate immunity</keyword>
<keyword id="KW-0472">Membrane</keyword>
<keyword id="KW-0677">Repeat</keyword>
<keyword id="KW-0964">Secreted</keyword>
<keyword id="KW-0732">Signal</keyword>
<keyword id="KW-1052">Target cell membrane</keyword>
<keyword id="KW-1053">Target membrane</keyword>
<keyword id="KW-0800">Toxin</keyword>
<sequence>MKQSIIIALFATIAVMACLQMVAAVPAPVPEAAPGPVAEAEAYASPEALASPEAEPILGIITSLLKSLGKK</sequence>
<evidence type="ECO:0000255" key="1"/>
<evidence type="ECO:0000269" key="2">
    <source>
    </source>
</evidence>
<evidence type="ECO:0000269" key="3">
    <source>
    </source>
</evidence>
<evidence type="ECO:0000269" key="4">
    <source>
    </source>
</evidence>
<evidence type="ECO:0000303" key="5">
    <source>
    </source>
</evidence>
<evidence type="ECO:0000303" key="6">
    <source>
    </source>
</evidence>
<evidence type="ECO:0000305" key="7"/>
<evidence type="ECO:0000305" key="8">
    <source>
    </source>
</evidence>
<evidence type="ECO:0000305" key="9">
    <source>
    </source>
</evidence>
<evidence type="ECO:0000305" key="10">
    <source>
    </source>
</evidence>
<evidence type="ECO:0000312" key="11">
    <source>
        <dbReference type="EMBL" id="ACU30739.1"/>
    </source>
</evidence>